<gene>
    <name evidence="1" type="primary">glmU</name>
    <name type="ordered locus">BBR47_00980</name>
</gene>
<dbReference type="EC" id="2.7.7.23" evidence="1"/>
<dbReference type="EC" id="2.3.1.157" evidence="1"/>
<dbReference type="EMBL" id="AP008955">
    <property type="protein sequence ID" value="BAH41075.1"/>
    <property type="molecule type" value="Genomic_DNA"/>
</dbReference>
<dbReference type="RefSeq" id="WP_012683871.1">
    <property type="nucleotide sequence ID" value="NC_012491.1"/>
</dbReference>
<dbReference type="SMR" id="C0ZHD4"/>
<dbReference type="STRING" id="358681.BBR47_00980"/>
<dbReference type="KEGG" id="bbe:BBR47_00980"/>
<dbReference type="eggNOG" id="COG1207">
    <property type="taxonomic scope" value="Bacteria"/>
</dbReference>
<dbReference type="HOGENOM" id="CLU_029499_15_2_9"/>
<dbReference type="UniPathway" id="UPA00113">
    <property type="reaction ID" value="UER00532"/>
</dbReference>
<dbReference type="UniPathway" id="UPA00113">
    <property type="reaction ID" value="UER00533"/>
</dbReference>
<dbReference type="UniPathway" id="UPA00973"/>
<dbReference type="Proteomes" id="UP000001877">
    <property type="component" value="Chromosome"/>
</dbReference>
<dbReference type="GO" id="GO:0005737">
    <property type="term" value="C:cytoplasm"/>
    <property type="evidence" value="ECO:0007669"/>
    <property type="project" value="UniProtKB-SubCell"/>
</dbReference>
<dbReference type="GO" id="GO:0016020">
    <property type="term" value="C:membrane"/>
    <property type="evidence" value="ECO:0007669"/>
    <property type="project" value="GOC"/>
</dbReference>
<dbReference type="GO" id="GO:0019134">
    <property type="term" value="F:glucosamine-1-phosphate N-acetyltransferase activity"/>
    <property type="evidence" value="ECO:0007669"/>
    <property type="project" value="UniProtKB-UniRule"/>
</dbReference>
<dbReference type="GO" id="GO:0000287">
    <property type="term" value="F:magnesium ion binding"/>
    <property type="evidence" value="ECO:0007669"/>
    <property type="project" value="UniProtKB-UniRule"/>
</dbReference>
<dbReference type="GO" id="GO:0003977">
    <property type="term" value="F:UDP-N-acetylglucosamine diphosphorylase activity"/>
    <property type="evidence" value="ECO:0007669"/>
    <property type="project" value="UniProtKB-UniRule"/>
</dbReference>
<dbReference type="GO" id="GO:0000902">
    <property type="term" value="P:cell morphogenesis"/>
    <property type="evidence" value="ECO:0007669"/>
    <property type="project" value="UniProtKB-UniRule"/>
</dbReference>
<dbReference type="GO" id="GO:0071555">
    <property type="term" value="P:cell wall organization"/>
    <property type="evidence" value="ECO:0007669"/>
    <property type="project" value="UniProtKB-KW"/>
</dbReference>
<dbReference type="GO" id="GO:0009245">
    <property type="term" value="P:lipid A biosynthetic process"/>
    <property type="evidence" value="ECO:0007669"/>
    <property type="project" value="UniProtKB-UniRule"/>
</dbReference>
<dbReference type="GO" id="GO:0009252">
    <property type="term" value="P:peptidoglycan biosynthetic process"/>
    <property type="evidence" value="ECO:0007669"/>
    <property type="project" value="UniProtKB-UniRule"/>
</dbReference>
<dbReference type="GO" id="GO:0008360">
    <property type="term" value="P:regulation of cell shape"/>
    <property type="evidence" value="ECO:0007669"/>
    <property type="project" value="UniProtKB-KW"/>
</dbReference>
<dbReference type="GO" id="GO:0006048">
    <property type="term" value="P:UDP-N-acetylglucosamine biosynthetic process"/>
    <property type="evidence" value="ECO:0007669"/>
    <property type="project" value="UniProtKB-UniPathway"/>
</dbReference>
<dbReference type="CDD" id="cd02540">
    <property type="entry name" value="GT2_GlmU_N_bac"/>
    <property type="match status" value="1"/>
</dbReference>
<dbReference type="CDD" id="cd03353">
    <property type="entry name" value="LbH_GlmU_C"/>
    <property type="match status" value="1"/>
</dbReference>
<dbReference type="Gene3D" id="2.160.10.10">
    <property type="entry name" value="Hexapeptide repeat proteins"/>
    <property type="match status" value="1"/>
</dbReference>
<dbReference type="Gene3D" id="3.90.550.10">
    <property type="entry name" value="Spore Coat Polysaccharide Biosynthesis Protein SpsA, Chain A"/>
    <property type="match status" value="1"/>
</dbReference>
<dbReference type="HAMAP" id="MF_01631">
    <property type="entry name" value="GlmU"/>
    <property type="match status" value="1"/>
</dbReference>
<dbReference type="InterPro" id="IPR005882">
    <property type="entry name" value="Bifunctional_GlmU"/>
</dbReference>
<dbReference type="InterPro" id="IPR050065">
    <property type="entry name" value="GlmU-like"/>
</dbReference>
<dbReference type="InterPro" id="IPR038009">
    <property type="entry name" value="GlmU_C_LbH"/>
</dbReference>
<dbReference type="InterPro" id="IPR001451">
    <property type="entry name" value="Hexapep"/>
</dbReference>
<dbReference type="InterPro" id="IPR018357">
    <property type="entry name" value="Hexapep_transf_CS"/>
</dbReference>
<dbReference type="InterPro" id="IPR005835">
    <property type="entry name" value="NTP_transferase_dom"/>
</dbReference>
<dbReference type="InterPro" id="IPR029044">
    <property type="entry name" value="Nucleotide-diphossugar_trans"/>
</dbReference>
<dbReference type="InterPro" id="IPR011004">
    <property type="entry name" value="Trimer_LpxA-like_sf"/>
</dbReference>
<dbReference type="NCBIfam" id="TIGR01173">
    <property type="entry name" value="glmU"/>
    <property type="match status" value="1"/>
</dbReference>
<dbReference type="NCBIfam" id="NF010934">
    <property type="entry name" value="PRK14354.1"/>
    <property type="match status" value="1"/>
</dbReference>
<dbReference type="PANTHER" id="PTHR43584:SF3">
    <property type="entry name" value="BIFUNCTIONAL PROTEIN GLMU"/>
    <property type="match status" value="1"/>
</dbReference>
<dbReference type="PANTHER" id="PTHR43584">
    <property type="entry name" value="NUCLEOTIDYL TRANSFERASE"/>
    <property type="match status" value="1"/>
</dbReference>
<dbReference type="Pfam" id="PF00132">
    <property type="entry name" value="Hexapep"/>
    <property type="match status" value="2"/>
</dbReference>
<dbReference type="Pfam" id="PF00483">
    <property type="entry name" value="NTP_transferase"/>
    <property type="match status" value="1"/>
</dbReference>
<dbReference type="SUPFAM" id="SSF53448">
    <property type="entry name" value="Nucleotide-diphospho-sugar transferases"/>
    <property type="match status" value="1"/>
</dbReference>
<dbReference type="SUPFAM" id="SSF51161">
    <property type="entry name" value="Trimeric LpxA-like enzymes"/>
    <property type="match status" value="1"/>
</dbReference>
<dbReference type="PROSITE" id="PS00101">
    <property type="entry name" value="HEXAPEP_TRANSFERASES"/>
    <property type="match status" value="1"/>
</dbReference>
<feature type="chain" id="PRO_1000186409" description="Bifunctional protein GlmU">
    <location>
        <begin position="1"/>
        <end position="461"/>
    </location>
</feature>
<feature type="region of interest" description="Pyrophosphorylase" evidence="1">
    <location>
        <begin position="1"/>
        <end position="230"/>
    </location>
</feature>
<feature type="region of interest" description="Linker" evidence="1">
    <location>
        <begin position="231"/>
        <end position="251"/>
    </location>
</feature>
<feature type="region of interest" description="N-acetyltransferase" evidence="1">
    <location>
        <begin position="252"/>
        <end position="461"/>
    </location>
</feature>
<feature type="active site" description="Proton acceptor" evidence="1">
    <location>
        <position position="363"/>
    </location>
</feature>
<feature type="binding site" evidence="1">
    <location>
        <begin position="9"/>
        <end position="12"/>
    </location>
    <ligand>
        <name>UDP-N-acetyl-alpha-D-glucosamine</name>
        <dbReference type="ChEBI" id="CHEBI:57705"/>
    </ligand>
</feature>
<feature type="binding site" evidence="1">
    <location>
        <position position="23"/>
    </location>
    <ligand>
        <name>UDP-N-acetyl-alpha-D-glucosamine</name>
        <dbReference type="ChEBI" id="CHEBI:57705"/>
    </ligand>
</feature>
<feature type="binding site" evidence="1">
    <location>
        <position position="73"/>
    </location>
    <ligand>
        <name>UDP-N-acetyl-alpha-D-glucosamine</name>
        <dbReference type="ChEBI" id="CHEBI:57705"/>
    </ligand>
</feature>
<feature type="binding site" evidence="1">
    <location>
        <begin position="78"/>
        <end position="79"/>
    </location>
    <ligand>
        <name>UDP-N-acetyl-alpha-D-glucosamine</name>
        <dbReference type="ChEBI" id="CHEBI:57705"/>
    </ligand>
</feature>
<feature type="binding site" evidence="1">
    <location>
        <begin position="101"/>
        <end position="103"/>
    </location>
    <ligand>
        <name>UDP-N-acetyl-alpha-D-glucosamine</name>
        <dbReference type="ChEBI" id="CHEBI:57705"/>
    </ligand>
</feature>
<feature type="binding site" evidence="1">
    <location>
        <position position="103"/>
    </location>
    <ligand>
        <name>Mg(2+)</name>
        <dbReference type="ChEBI" id="CHEBI:18420"/>
    </ligand>
</feature>
<feature type="binding site" evidence="1">
    <location>
        <position position="140"/>
    </location>
    <ligand>
        <name>UDP-N-acetyl-alpha-D-glucosamine</name>
        <dbReference type="ChEBI" id="CHEBI:57705"/>
    </ligand>
</feature>
<feature type="binding site" evidence="1">
    <location>
        <position position="155"/>
    </location>
    <ligand>
        <name>UDP-N-acetyl-alpha-D-glucosamine</name>
        <dbReference type="ChEBI" id="CHEBI:57705"/>
    </ligand>
</feature>
<feature type="binding site" evidence="1">
    <location>
        <position position="170"/>
    </location>
    <ligand>
        <name>UDP-N-acetyl-alpha-D-glucosamine</name>
        <dbReference type="ChEBI" id="CHEBI:57705"/>
    </ligand>
</feature>
<feature type="binding site" evidence="1">
    <location>
        <position position="228"/>
    </location>
    <ligand>
        <name>Mg(2+)</name>
        <dbReference type="ChEBI" id="CHEBI:18420"/>
    </ligand>
</feature>
<feature type="binding site" evidence="1">
    <location>
        <position position="228"/>
    </location>
    <ligand>
        <name>UDP-N-acetyl-alpha-D-glucosamine</name>
        <dbReference type="ChEBI" id="CHEBI:57705"/>
    </ligand>
</feature>
<feature type="binding site" evidence="1">
    <location>
        <position position="333"/>
    </location>
    <ligand>
        <name>UDP-N-acetyl-alpha-D-glucosamine</name>
        <dbReference type="ChEBI" id="CHEBI:57705"/>
    </ligand>
</feature>
<feature type="binding site" evidence="1">
    <location>
        <position position="351"/>
    </location>
    <ligand>
        <name>UDP-N-acetyl-alpha-D-glucosamine</name>
        <dbReference type="ChEBI" id="CHEBI:57705"/>
    </ligand>
</feature>
<feature type="binding site" evidence="1">
    <location>
        <position position="366"/>
    </location>
    <ligand>
        <name>UDP-N-acetyl-alpha-D-glucosamine</name>
        <dbReference type="ChEBI" id="CHEBI:57705"/>
    </ligand>
</feature>
<feature type="binding site" evidence="1">
    <location>
        <position position="377"/>
    </location>
    <ligand>
        <name>UDP-N-acetyl-alpha-D-glucosamine</name>
        <dbReference type="ChEBI" id="CHEBI:57705"/>
    </ligand>
</feature>
<feature type="binding site" evidence="1">
    <location>
        <begin position="386"/>
        <end position="387"/>
    </location>
    <ligand>
        <name>acetyl-CoA</name>
        <dbReference type="ChEBI" id="CHEBI:57288"/>
    </ligand>
</feature>
<feature type="binding site" evidence="1">
    <location>
        <position position="423"/>
    </location>
    <ligand>
        <name>acetyl-CoA</name>
        <dbReference type="ChEBI" id="CHEBI:57288"/>
    </ligand>
</feature>
<feature type="binding site" evidence="1">
    <location>
        <position position="440"/>
    </location>
    <ligand>
        <name>acetyl-CoA</name>
        <dbReference type="ChEBI" id="CHEBI:57288"/>
    </ligand>
</feature>
<comment type="function">
    <text evidence="1">Catalyzes the last two sequential reactions in the de novo biosynthetic pathway for UDP-N-acetylglucosamine (UDP-GlcNAc). The C-terminal domain catalyzes the transfer of acetyl group from acetyl coenzyme A to glucosamine-1-phosphate (GlcN-1-P) to produce N-acetylglucosamine-1-phosphate (GlcNAc-1-P), which is converted into UDP-GlcNAc by the transfer of uridine 5-monophosphate (from uridine 5-triphosphate), a reaction catalyzed by the N-terminal domain.</text>
</comment>
<comment type="catalytic activity">
    <reaction evidence="1">
        <text>alpha-D-glucosamine 1-phosphate + acetyl-CoA = N-acetyl-alpha-D-glucosamine 1-phosphate + CoA + H(+)</text>
        <dbReference type="Rhea" id="RHEA:13725"/>
        <dbReference type="ChEBI" id="CHEBI:15378"/>
        <dbReference type="ChEBI" id="CHEBI:57287"/>
        <dbReference type="ChEBI" id="CHEBI:57288"/>
        <dbReference type="ChEBI" id="CHEBI:57776"/>
        <dbReference type="ChEBI" id="CHEBI:58516"/>
        <dbReference type="EC" id="2.3.1.157"/>
    </reaction>
</comment>
<comment type="catalytic activity">
    <reaction evidence="1">
        <text>N-acetyl-alpha-D-glucosamine 1-phosphate + UTP + H(+) = UDP-N-acetyl-alpha-D-glucosamine + diphosphate</text>
        <dbReference type="Rhea" id="RHEA:13509"/>
        <dbReference type="ChEBI" id="CHEBI:15378"/>
        <dbReference type="ChEBI" id="CHEBI:33019"/>
        <dbReference type="ChEBI" id="CHEBI:46398"/>
        <dbReference type="ChEBI" id="CHEBI:57705"/>
        <dbReference type="ChEBI" id="CHEBI:57776"/>
        <dbReference type="EC" id="2.7.7.23"/>
    </reaction>
</comment>
<comment type="cofactor">
    <cofactor evidence="1">
        <name>Mg(2+)</name>
        <dbReference type="ChEBI" id="CHEBI:18420"/>
    </cofactor>
    <text evidence="1">Binds 1 Mg(2+) ion per subunit.</text>
</comment>
<comment type="pathway">
    <text evidence="1">Nucleotide-sugar biosynthesis; UDP-N-acetyl-alpha-D-glucosamine biosynthesis; N-acetyl-alpha-D-glucosamine 1-phosphate from alpha-D-glucosamine 6-phosphate (route II): step 2/2.</text>
</comment>
<comment type="pathway">
    <text evidence="1">Nucleotide-sugar biosynthesis; UDP-N-acetyl-alpha-D-glucosamine biosynthesis; UDP-N-acetyl-alpha-D-glucosamine from N-acetyl-alpha-D-glucosamine 1-phosphate: step 1/1.</text>
</comment>
<comment type="pathway">
    <text evidence="1">Bacterial outer membrane biogenesis; LPS lipid A biosynthesis.</text>
</comment>
<comment type="subunit">
    <text evidence="1">Homotrimer.</text>
</comment>
<comment type="subcellular location">
    <subcellularLocation>
        <location evidence="1">Cytoplasm</location>
    </subcellularLocation>
</comment>
<comment type="similarity">
    <text evidence="1">In the N-terminal section; belongs to the N-acetylglucosamine-1-phosphate uridyltransferase family.</text>
</comment>
<comment type="similarity">
    <text evidence="1">In the C-terminal section; belongs to the transferase hexapeptide repeat family.</text>
</comment>
<sequence length="461" mass="49353">MSKIHAVVLAAGQGTRMKSKLYKVLHPVCGKPMVQHVVDTMASMQVQDIVVVVGHGADAVRAKLGEDVTYALQEEQLGTAHAVSQAAPFLQDKEGTTFLLYGDVPLLSATTLSALLTYHEEQQAAATVLTAVLPDATGYGRIVRNEAGEVLRIVEHKDASEAERAIREINTGIYCYDNRKLWKALAEVKNDNAQGEYYVTDVVGILRDAGEKVVGYEAIDPEETLGVNDRVQLSEAEAYMKKRIMTGHMRNGVTIIDPTSTYIETDVKIEADTVIHPGSFLRGQTTVGADCVIGPQADLTNVEVASGVTISYSVMVDSRVESDSSVGPFAYVRPGSQIGSNAKIGDFVELKNAKIGDGTKVPHLSYVGDAEIGDGVNIGCGTITVNYDGAVKHKTTVKDGAFIGCNSNLVAPVTVGQNAYVAAGSTINQDVPDNALAIARERQVNKIDYANKMPRKGKKQS</sequence>
<name>GLMU_BREBN</name>
<evidence type="ECO:0000255" key="1">
    <source>
        <dbReference type="HAMAP-Rule" id="MF_01631"/>
    </source>
</evidence>
<reference key="1">
    <citation type="submission" date="2005-03" db="EMBL/GenBank/DDBJ databases">
        <title>Brevibacillus brevis strain 47, complete genome.</title>
        <authorList>
            <person name="Hosoyama A."/>
            <person name="Yamada R."/>
            <person name="Hongo Y."/>
            <person name="Terui Y."/>
            <person name="Ankai A."/>
            <person name="Masuyama W."/>
            <person name="Sekiguchi M."/>
            <person name="Takeda T."/>
            <person name="Asano K."/>
            <person name="Ohji S."/>
            <person name="Ichikawa N."/>
            <person name="Narita S."/>
            <person name="Aoki N."/>
            <person name="Miura H."/>
            <person name="Matsushita S."/>
            <person name="Sekigawa T."/>
            <person name="Yamagata H."/>
            <person name="Yoshikawa H."/>
            <person name="Udaka S."/>
            <person name="Tanikawa S."/>
            <person name="Fujita N."/>
        </authorList>
    </citation>
    <scope>NUCLEOTIDE SEQUENCE [LARGE SCALE GENOMIC DNA]</scope>
    <source>
        <strain>47 / JCM 6285 / NBRC 100599</strain>
    </source>
</reference>
<proteinExistence type="inferred from homology"/>
<protein>
    <recommendedName>
        <fullName evidence="1">Bifunctional protein GlmU</fullName>
    </recommendedName>
    <domain>
        <recommendedName>
            <fullName evidence="1">UDP-N-acetylglucosamine pyrophosphorylase</fullName>
            <ecNumber evidence="1">2.7.7.23</ecNumber>
        </recommendedName>
        <alternativeName>
            <fullName evidence="1">N-acetylglucosamine-1-phosphate uridyltransferase</fullName>
        </alternativeName>
    </domain>
    <domain>
        <recommendedName>
            <fullName evidence="1">Glucosamine-1-phosphate N-acetyltransferase</fullName>
            <ecNumber evidence="1">2.3.1.157</ecNumber>
        </recommendedName>
    </domain>
</protein>
<accession>C0ZHD4</accession>
<keyword id="KW-0012">Acyltransferase</keyword>
<keyword id="KW-0133">Cell shape</keyword>
<keyword id="KW-0961">Cell wall biogenesis/degradation</keyword>
<keyword id="KW-0963">Cytoplasm</keyword>
<keyword id="KW-0460">Magnesium</keyword>
<keyword id="KW-0479">Metal-binding</keyword>
<keyword id="KW-0511">Multifunctional enzyme</keyword>
<keyword id="KW-0548">Nucleotidyltransferase</keyword>
<keyword id="KW-0573">Peptidoglycan synthesis</keyword>
<keyword id="KW-1185">Reference proteome</keyword>
<keyword id="KW-0677">Repeat</keyword>
<keyword id="KW-0808">Transferase</keyword>
<organism>
    <name type="scientific">Brevibacillus brevis (strain 47 / JCM 6285 / NBRC 100599)</name>
    <dbReference type="NCBI Taxonomy" id="358681"/>
    <lineage>
        <taxon>Bacteria</taxon>
        <taxon>Bacillati</taxon>
        <taxon>Bacillota</taxon>
        <taxon>Bacilli</taxon>
        <taxon>Bacillales</taxon>
        <taxon>Paenibacillaceae</taxon>
        <taxon>Brevibacillus</taxon>
    </lineage>
</organism>